<gene>
    <name evidence="1" type="primary">atpF</name>
    <name type="ordered locus">Shewana3_4134</name>
</gene>
<protein>
    <recommendedName>
        <fullName evidence="1">ATP synthase subunit b</fullName>
    </recommendedName>
    <alternativeName>
        <fullName evidence="1">ATP synthase F(0) sector subunit b</fullName>
    </alternativeName>
    <alternativeName>
        <fullName evidence="1">ATPase subunit I</fullName>
    </alternativeName>
    <alternativeName>
        <fullName evidence="1">F-type ATPase subunit b</fullName>
        <shortName evidence="1">F-ATPase subunit b</shortName>
    </alternativeName>
</protein>
<reference key="1">
    <citation type="submission" date="2006-09" db="EMBL/GenBank/DDBJ databases">
        <title>Complete sequence of chromosome 1 of Shewanella sp. ANA-3.</title>
        <authorList>
            <person name="Copeland A."/>
            <person name="Lucas S."/>
            <person name="Lapidus A."/>
            <person name="Barry K."/>
            <person name="Detter J.C."/>
            <person name="Glavina del Rio T."/>
            <person name="Hammon N."/>
            <person name="Israni S."/>
            <person name="Dalin E."/>
            <person name="Tice H."/>
            <person name="Pitluck S."/>
            <person name="Chertkov O."/>
            <person name="Brettin T."/>
            <person name="Bruce D."/>
            <person name="Han C."/>
            <person name="Tapia R."/>
            <person name="Gilna P."/>
            <person name="Schmutz J."/>
            <person name="Larimer F."/>
            <person name="Land M."/>
            <person name="Hauser L."/>
            <person name="Kyrpides N."/>
            <person name="Kim E."/>
            <person name="Newman D."/>
            <person name="Salticov C."/>
            <person name="Konstantinidis K."/>
            <person name="Klappenback J."/>
            <person name="Tiedje J."/>
            <person name="Richardson P."/>
        </authorList>
    </citation>
    <scope>NUCLEOTIDE SEQUENCE [LARGE SCALE GENOMIC DNA]</scope>
    <source>
        <strain>ANA-3</strain>
    </source>
</reference>
<proteinExistence type="inferred from homology"/>
<keyword id="KW-0066">ATP synthesis</keyword>
<keyword id="KW-0997">Cell inner membrane</keyword>
<keyword id="KW-1003">Cell membrane</keyword>
<keyword id="KW-0138">CF(0)</keyword>
<keyword id="KW-0375">Hydrogen ion transport</keyword>
<keyword id="KW-0406">Ion transport</keyword>
<keyword id="KW-0472">Membrane</keyword>
<keyword id="KW-0812">Transmembrane</keyword>
<keyword id="KW-1133">Transmembrane helix</keyword>
<keyword id="KW-0813">Transport</keyword>
<evidence type="ECO:0000255" key="1">
    <source>
        <dbReference type="HAMAP-Rule" id="MF_01398"/>
    </source>
</evidence>
<feature type="chain" id="PRO_0000368765" description="ATP synthase subunit b">
    <location>
        <begin position="1"/>
        <end position="156"/>
    </location>
</feature>
<feature type="transmembrane region" description="Helical" evidence="1">
    <location>
        <begin position="7"/>
        <end position="27"/>
    </location>
</feature>
<sequence length="156" mass="17311">MNFNATLIGQTVAFIIFVWFCMKFVWPPLMNAIEARQKRIADGLADADRAVKDLELAQAKATDQLKEAKATANEIIEQANKRKAQIVEEAKAEADAERAKIIAQGKAEIEAERNRVKEDLRKQVATLAIMGAEKILERSIDPAAHSDIVNKLVAEI</sequence>
<accession>A0L2T2</accession>
<name>ATPF_SHESA</name>
<organism>
    <name type="scientific">Shewanella sp. (strain ANA-3)</name>
    <dbReference type="NCBI Taxonomy" id="94122"/>
    <lineage>
        <taxon>Bacteria</taxon>
        <taxon>Pseudomonadati</taxon>
        <taxon>Pseudomonadota</taxon>
        <taxon>Gammaproteobacteria</taxon>
        <taxon>Alteromonadales</taxon>
        <taxon>Shewanellaceae</taxon>
        <taxon>Shewanella</taxon>
    </lineage>
</organism>
<dbReference type="EMBL" id="CP000469">
    <property type="protein sequence ID" value="ABK50351.1"/>
    <property type="molecule type" value="Genomic_DNA"/>
</dbReference>
<dbReference type="RefSeq" id="WP_011718836.1">
    <property type="nucleotide sequence ID" value="NC_008577.1"/>
</dbReference>
<dbReference type="SMR" id="A0L2T2"/>
<dbReference type="STRING" id="94122.Shewana3_4134"/>
<dbReference type="KEGG" id="shn:Shewana3_4134"/>
<dbReference type="eggNOG" id="COG0711">
    <property type="taxonomic scope" value="Bacteria"/>
</dbReference>
<dbReference type="HOGENOM" id="CLU_079215_4_5_6"/>
<dbReference type="OrthoDB" id="9788020at2"/>
<dbReference type="Proteomes" id="UP000002589">
    <property type="component" value="Chromosome"/>
</dbReference>
<dbReference type="GO" id="GO:0005886">
    <property type="term" value="C:plasma membrane"/>
    <property type="evidence" value="ECO:0007669"/>
    <property type="project" value="UniProtKB-SubCell"/>
</dbReference>
<dbReference type="GO" id="GO:0045259">
    <property type="term" value="C:proton-transporting ATP synthase complex"/>
    <property type="evidence" value="ECO:0007669"/>
    <property type="project" value="UniProtKB-KW"/>
</dbReference>
<dbReference type="GO" id="GO:0046933">
    <property type="term" value="F:proton-transporting ATP synthase activity, rotational mechanism"/>
    <property type="evidence" value="ECO:0007669"/>
    <property type="project" value="UniProtKB-UniRule"/>
</dbReference>
<dbReference type="GO" id="GO:0046961">
    <property type="term" value="F:proton-transporting ATPase activity, rotational mechanism"/>
    <property type="evidence" value="ECO:0007669"/>
    <property type="project" value="TreeGrafter"/>
</dbReference>
<dbReference type="CDD" id="cd06503">
    <property type="entry name" value="ATP-synt_Fo_b"/>
    <property type="match status" value="1"/>
</dbReference>
<dbReference type="FunFam" id="1.20.5.620:FF:000001">
    <property type="entry name" value="ATP synthase subunit b"/>
    <property type="match status" value="1"/>
</dbReference>
<dbReference type="Gene3D" id="1.20.5.620">
    <property type="entry name" value="F1F0 ATP synthase subunit B, membrane domain"/>
    <property type="match status" value="1"/>
</dbReference>
<dbReference type="HAMAP" id="MF_01398">
    <property type="entry name" value="ATP_synth_b_bprime"/>
    <property type="match status" value="1"/>
</dbReference>
<dbReference type="InterPro" id="IPR028987">
    <property type="entry name" value="ATP_synth_B-like_membr_sf"/>
</dbReference>
<dbReference type="InterPro" id="IPR002146">
    <property type="entry name" value="ATP_synth_b/b'su_bac/chlpt"/>
</dbReference>
<dbReference type="InterPro" id="IPR005864">
    <property type="entry name" value="ATP_synth_F0_bsu_bac"/>
</dbReference>
<dbReference type="InterPro" id="IPR050059">
    <property type="entry name" value="ATP_synthase_B_chain"/>
</dbReference>
<dbReference type="NCBIfam" id="TIGR01144">
    <property type="entry name" value="ATP_synt_b"/>
    <property type="match status" value="1"/>
</dbReference>
<dbReference type="NCBIfam" id="NF004411">
    <property type="entry name" value="PRK05759.1-2"/>
    <property type="match status" value="1"/>
</dbReference>
<dbReference type="NCBIfam" id="NF004413">
    <property type="entry name" value="PRK05759.1-4"/>
    <property type="match status" value="1"/>
</dbReference>
<dbReference type="PANTHER" id="PTHR33445:SF1">
    <property type="entry name" value="ATP SYNTHASE SUBUNIT B"/>
    <property type="match status" value="1"/>
</dbReference>
<dbReference type="PANTHER" id="PTHR33445">
    <property type="entry name" value="ATP SYNTHASE SUBUNIT B', CHLOROPLASTIC"/>
    <property type="match status" value="1"/>
</dbReference>
<dbReference type="Pfam" id="PF00430">
    <property type="entry name" value="ATP-synt_B"/>
    <property type="match status" value="1"/>
</dbReference>
<dbReference type="SUPFAM" id="SSF81573">
    <property type="entry name" value="F1F0 ATP synthase subunit B, membrane domain"/>
    <property type="match status" value="1"/>
</dbReference>
<comment type="function">
    <text evidence="1">F(1)F(0) ATP synthase produces ATP from ADP in the presence of a proton or sodium gradient. F-type ATPases consist of two structural domains, F(1) containing the extramembraneous catalytic core and F(0) containing the membrane proton channel, linked together by a central stalk and a peripheral stalk. During catalysis, ATP synthesis in the catalytic domain of F(1) is coupled via a rotary mechanism of the central stalk subunits to proton translocation.</text>
</comment>
<comment type="function">
    <text evidence="1">Component of the F(0) channel, it forms part of the peripheral stalk, linking F(1) to F(0).</text>
</comment>
<comment type="subunit">
    <text evidence="1">F-type ATPases have 2 components, F(1) - the catalytic core - and F(0) - the membrane proton channel. F(1) has five subunits: alpha(3), beta(3), gamma(1), delta(1), epsilon(1). F(0) has three main subunits: a(1), b(2) and c(10-14). The alpha and beta chains form an alternating ring which encloses part of the gamma chain. F(1) is attached to F(0) by a central stalk formed by the gamma and epsilon chains, while a peripheral stalk is formed by the delta and b chains.</text>
</comment>
<comment type="subcellular location">
    <subcellularLocation>
        <location evidence="1">Cell inner membrane</location>
        <topology evidence="1">Single-pass membrane protein</topology>
    </subcellularLocation>
</comment>
<comment type="similarity">
    <text evidence="1">Belongs to the ATPase B chain family.</text>
</comment>